<reference key="1">
    <citation type="journal article" date="2006" name="J. Bacteriol.">
        <title>Comparative genomic evidence for a close relationship between the dimorphic prosthecate bacteria Hyphomonas neptunium and Caulobacter crescentus.</title>
        <authorList>
            <person name="Badger J.H."/>
            <person name="Hoover T.R."/>
            <person name="Brun Y.V."/>
            <person name="Weiner R.M."/>
            <person name="Laub M.T."/>
            <person name="Alexandre G."/>
            <person name="Mrazek J."/>
            <person name="Ren Q."/>
            <person name="Paulsen I.T."/>
            <person name="Nelson K.E."/>
            <person name="Khouri H.M."/>
            <person name="Radune D."/>
            <person name="Sosa J."/>
            <person name="Dodson R.J."/>
            <person name="Sullivan S.A."/>
            <person name="Rosovitz M.J."/>
            <person name="Madupu R."/>
            <person name="Brinkac L.M."/>
            <person name="Durkin A.S."/>
            <person name="Daugherty S.C."/>
            <person name="Kothari S.P."/>
            <person name="Giglio M.G."/>
            <person name="Zhou L."/>
            <person name="Haft D.H."/>
            <person name="Selengut J.D."/>
            <person name="Davidsen T.M."/>
            <person name="Yang Q."/>
            <person name="Zafar N."/>
            <person name="Ward N.L."/>
        </authorList>
    </citation>
    <scope>NUCLEOTIDE SEQUENCE [LARGE SCALE GENOMIC DNA]</scope>
    <source>
        <strain>ATCC 15444</strain>
    </source>
</reference>
<name>MNMA_HYPNA</name>
<evidence type="ECO:0000255" key="1">
    <source>
        <dbReference type="HAMAP-Rule" id="MF_00144"/>
    </source>
</evidence>
<dbReference type="EC" id="2.8.1.13" evidence="1"/>
<dbReference type="EMBL" id="CP000158">
    <property type="protein sequence ID" value="ABI77026.1"/>
    <property type="molecule type" value="Genomic_DNA"/>
</dbReference>
<dbReference type="RefSeq" id="WP_011645670.1">
    <property type="nucleotide sequence ID" value="NC_008358.1"/>
</dbReference>
<dbReference type="SMR" id="Q0C4H3"/>
<dbReference type="STRING" id="228405.HNE_0641"/>
<dbReference type="KEGG" id="hne:HNE_0641"/>
<dbReference type="eggNOG" id="COG0482">
    <property type="taxonomic scope" value="Bacteria"/>
</dbReference>
<dbReference type="HOGENOM" id="CLU_035188_0_0_5"/>
<dbReference type="Proteomes" id="UP000001959">
    <property type="component" value="Chromosome"/>
</dbReference>
<dbReference type="GO" id="GO:0005737">
    <property type="term" value="C:cytoplasm"/>
    <property type="evidence" value="ECO:0007669"/>
    <property type="project" value="UniProtKB-SubCell"/>
</dbReference>
<dbReference type="GO" id="GO:0005524">
    <property type="term" value="F:ATP binding"/>
    <property type="evidence" value="ECO:0007669"/>
    <property type="project" value="UniProtKB-KW"/>
</dbReference>
<dbReference type="GO" id="GO:0000049">
    <property type="term" value="F:tRNA binding"/>
    <property type="evidence" value="ECO:0007669"/>
    <property type="project" value="UniProtKB-KW"/>
</dbReference>
<dbReference type="GO" id="GO:0103016">
    <property type="term" value="F:tRNA-uridine 2-sulfurtransferase activity"/>
    <property type="evidence" value="ECO:0007669"/>
    <property type="project" value="UniProtKB-EC"/>
</dbReference>
<dbReference type="GO" id="GO:0002143">
    <property type="term" value="P:tRNA wobble position uridine thiolation"/>
    <property type="evidence" value="ECO:0007669"/>
    <property type="project" value="TreeGrafter"/>
</dbReference>
<dbReference type="CDD" id="cd01998">
    <property type="entry name" value="MnmA_TRMU-like"/>
    <property type="match status" value="1"/>
</dbReference>
<dbReference type="FunFam" id="2.30.30.280:FF:000001">
    <property type="entry name" value="tRNA-specific 2-thiouridylase MnmA"/>
    <property type="match status" value="1"/>
</dbReference>
<dbReference type="FunFam" id="3.40.50.620:FF:000115">
    <property type="entry name" value="tRNA-specific 2-thiouridylase MnmA"/>
    <property type="match status" value="1"/>
</dbReference>
<dbReference type="Gene3D" id="2.30.30.280">
    <property type="entry name" value="Adenine nucleotide alpha hydrolases-like domains"/>
    <property type="match status" value="1"/>
</dbReference>
<dbReference type="Gene3D" id="3.40.50.620">
    <property type="entry name" value="HUPs"/>
    <property type="match status" value="1"/>
</dbReference>
<dbReference type="Gene3D" id="2.40.30.10">
    <property type="entry name" value="Translation factors"/>
    <property type="match status" value="1"/>
</dbReference>
<dbReference type="HAMAP" id="MF_00144">
    <property type="entry name" value="tRNA_thiouridyl_MnmA"/>
    <property type="match status" value="1"/>
</dbReference>
<dbReference type="InterPro" id="IPR004506">
    <property type="entry name" value="MnmA-like"/>
</dbReference>
<dbReference type="InterPro" id="IPR046885">
    <property type="entry name" value="MnmA-like_C"/>
</dbReference>
<dbReference type="InterPro" id="IPR046884">
    <property type="entry name" value="MnmA-like_central"/>
</dbReference>
<dbReference type="InterPro" id="IPR023382">
    <property type="entry name" value="MnmA-like_central_sf"/>
</dbReference>
<dbReference type="InterPro" id="IPR014729">
    <property type="entry name" value="Rossmann-like_a/b/a_fold"/>
</dbReference>
<dbReference type="NCBIfam" id="NF001138">
    <property type="entry name" value="PRK00143.1"/>
    <property type="match status" value="1"/>
</dbReference>
<dbReference type="NCBIfam" id="TIGR00420">
    <property type="entry name" value="trmU"/>
    <property type="match status" value="1"/>
</dbReference>
<dbReference type="PANTHER" id="PTHR11933:SF5">
    <property type="entry name" value="MITOCHONDRIAL TRNA-SPECIFIC 2-THIOURIDYLASE 1"/>
    <property type="match status" value="1"/>
</dbReference>
<dbReference type="PANTHER" id="PTHR11933">
    <property type="entry name" value="TRNA 5-METHYLAMINOMETHYL-2-THIOURIDYLATE -METHYLTRANSFERASE"/>
    <property type="match status" value="1"/>
</dbReference>
<dbReference type="Pfam" id="PF03054">
    <property type="entry name" value="tRNA_Me_trans"/>
    <property type="match status" value="1"/>
</dbReference>
<dbReference type="Pfam" id="PF20258">
    <property type="entry name" value="tRNA_Me_trans_C"/>
    <property type="match status" value="1"/>
</dbReference>
<dbReference type="Pfam" id="PF20259">
    <property type="entry name" value="tRNA_Me_trans_M"/>
    <property type="match status" value="1"/>
</dbReference>
<dbReference type="SUPFAM" id="SSF52402">
    <property type="entry name" value="Adenine nucleotide alpha hydrolases-like"/>
    <property type="match status" value="1"/>
</dbReference>
<proteinExistence type="inferred from homology"/>
<organism>
    <name type="scientific">Hyphomonas neptunium (strain ATCC 15444)</name>
    <dbReference type="NCBI Taxonomy" id="228405"/>
    <lineage>
        <taxon>Bacteria</taxon>
        <taxon>Pseudomonadati</taxon>
        <taxon>Pseudomonadota</taxon>
        <taxon>Alphaproteobacteria</taxon>
        <taxon>Hyphomonadales</taxon>
        <taxon>Hyphomonadaceae</taxon>
        <taxon>Hyphomonas</taxon>
    </lineage>
</organism>
<protein>
    <recommendedName>
        <fullName evidence="1">tRNA-specific 2-thiouridylase MnmA</fullName>
        <ecNumber evidence="1">2.8.1.13</ecNumber>
    </recommendedName>
</protein>
<keyword id="KW-0067">ATP-binding</keyword>
<keyword id="KW-0963">Cytoplasm</keyword>
<keyword id="KW-1015">Disulfide bond</keyword>
<keyword id="KW-0547">Nucleotide-binding</keyword>
<keyword id="KW-1185">Reference proteome</keyword>
<keyword id="KW-0694">RNA-binding</keyword>
<keyword id="KW-0808">Transferase</keyword>
<keyword id="KW-0819">tRNA processing</keyword>
<keyword id="KW-0820">tRNA-binding</keyword>
<comment type="function">
    <text evidence="1">Catalyzes the 2-thiolation of uridine at the wobble position (U34) of tRNA, leading to the formation of s(2)U34.</text>
</comment>
<comment type="catalytic activity">
    <reaction evidence="1">
        <text>S-sulfanyl-L-cysteinyl-[protein] + uridine(34) in tRNA + AH2 + ATP = 2-thiouridine(34) in tRNA + L-cysteinyl-[protein] + A + AMP + diphosphate + H(+)</text>
        <dbReference type="Rhea" id="RHEA:47032"/>
        <dbReference type="Rhea" id="RHEA-COMP:10131"/>
        <dbReference type="Rhea" id="RHEA-COMP:11726"/>
        <dbReference type="Rhea" id="RHEA-COMP:11727"/>
        <dbReference type="Rhea" id="RHEA-COMP:11728"/>
        <dbReference type="ChEBI" id="CHEBI:13193"/>
        <dbReference type="ChEBI" id="CHEBI:15378"/>
        <dbReference type="ChEBI" id="CHEBI:17499"/>
        <dbReference type="ChEBI" id="CHEBI:29950"/>
        <dbReference type="ChEBI" id="CHEBI:30616"/>
        <dbReference type="ChEBI" id="CHEBI:33019"/>
        <dbReference type="ChEBI" id="CHEBI:61963"/>
        <dbReference type="ChEBI" id="CHEBI:65315"/>
        <dbReference type="ChEBI" id="CHEBI:87170"/>
        <dbReference type="ChEBI" id="CHEBI:456215"/>
        <dbReference type="EC" id="2.8.1.13"/>
    </reaction>
</comment>
<comment type="subcellular location">
    <subcellularLocation>
        <location evidence="1">Cytoplasm</location>
    </subcellularLocation>
</comment>
<comment type="similarity">
    <text evidence="1">Belongs to the MnmA/TRMU family.</text>
</comment>
<accession>Q0C4H3</accession>
<feature type="chain" id="PRO_0000349664" description="tRNA-specific 2-thiouridylase MnmA">
    <location>
        <begin position="1"/>
        <end position="394"/>
    </location>
</feature>
<feature type="region of interest" description="Interaction with tRNA" evidence="1">
    <location>
        <begin position="170"/>
        <end position="172"/>
    </location>
</feature>
<feature type="active site" description="Nucleophile" evidence="1">
    <location>
        <position position="124"/>
    </location>
</feature>
<feature type="active site" description="Cysteine persulfide intermediate" evidence="1">
    <location>
        <position position="220"/>
    </location>
</feature>
<feature type="binding site" evidence="1">
    <location>
        <begin position="30"/>
        <end position="37"/>
    </location>
    <ligand>
        <name>ATP</name>
        <dbReference type="ChEBI" id="CHEBI:30616"/>
    </ligand>
</feature>
<feature type="binding site" evidence="1">
    <location>
        <position position="56"/>
    </location>
    <ligand>
        <name>ATP</name>
        <dbReference type="ChEBI" id="CHEBI:30616"/>
    </ligand>
</feature>
<feature type="binding site" evidence="1">
    <location>
        <position position="148"/>
    </location>
    <ligand>
        <name>ATP</name>
        <dbReference type="ChEBI" id="CHEBI:30616"/>
    </ligand>
</feature>
<feature type="site" description="Interaction with tRNA" evidence="1">
    <location>
        <position position="149"/>
    </location>
</feature>
<feature type="site" description="Interaction with tRNA" evidence="1">
    <location>
        <position position="362"/>
    </location>
</feature>
<feature type="disulfide bond" description="Alternate" evidence="1">
    <location>
        <begin position="124"/>
        <end position="220"/>
    </location>
</feature>
<gene>
    <name evidence="1" type="primary">mnmA</name>
    <name type="ordered locus">HNE_0641</name>
</gene>
<sequence>MTIDTAAWPAGRVNSLGFAKPPHETRVVAAMSGGVDSSVVAAMLKAEGYDVIGITLQLYDHGAAIEKKGACCAGQDIHDARNVSDAIGIPHYVLDYESRFREQVMEDFADTYLSGSTPIPCIRCNQTVKFADLLATAKELGADCLATGHYIRRTDGPEGPELHRAQDASRDQSYFLFATTRAQLDFLRFPLGSLPKSEVRELAEKFALQVAAKPDSQDICFVPDGSYAKVVEKLRPGSGRGGEIVHLDGRVLGKHEGVIHYTIGQRRGLGVATGDPLFVVKIDAPARRVIVGPREALMTRGLLLEELNWLGQGSLEEAATHGARVLIRVRSTRPPVPGRLGYEDGVPAVFFDAPEEGVARGQAAVLYDLEGSTRILGGGFIARPLPADERVVAA</sequence>